<feature type="chain" id="PRO_0000132954" description="Uncharacterized 8.0 kDa protein in EGT-IAP1 intergenic region">
    <location>
        <begin position="1"/>
        <end position="69"/>
    </location>
</feature>
<feature type="region of interest" description="Disordered" evidence="1">
    <location>
        <begin position="22"/>
        <end position="48"/>
    </location>
</feature>
<feature type="compositionally biased region" description="Pro residues" evidence="1">
    <location>
        <begin position="37"/>
        <end position="48"/>
    </location>
</feature>
<name>Y020_NPVAC</name>
<reference key="1">
    <citation type="journal article" date="1994" name="Virology">
        <title>The complete DNA sequence of Autographa californica nuclear polyhedrosis virus.</title>
        <authorList>
            <person name="Ayres M.D."/>
            <person name="Howard S.C."/>
            <person name="Kuzio J."/>
            <person name="Lopez-Ferber M."/>
            <person name="Possee R.D."/>
        </authorList>
    </citation>
    <scope>NUCLEOTIDE SEQUENCE [LARGE SCALE GENOMIC DNA]</scope>
    <source>
        <strain>C6</strain>
    </source>
</reference>
<protein>
    <recommendedName>
        <fullName>Uncharacterized 8.0 kDa protein in EGT-IAP1 intergenic region</fullName>
    </recommendedName>
</protein>
<evidence type="ECO:0000256" key="1">
    <source>
        <dbReference type="SAM" id="MobiDB-lite"/>
    </source>
</evidence>
<accession>P41425</accession>
<keyword id="KW-1185">Reference proteome</keyword>
<organismHost>
    <name type="scientific">Lepidoptera</name>
    <name type="common">butterflies and moths</name>
    <dbReference type="NCBI Taxonomy" id="7088"/>
</organismHost>
<proteinExistence type="predicted"/>
<dbReference type="EMBL" id="L22858">
    <property type="protein sequence ID" value="AAA66650.1"/>
    <property type="molecule type" value="Genomic_DNA"/>
</dbReference>
<dbReference type="PIR" id="D72852">
    <property type="entry name" value="D72852"/>
</dbReference>
<dbReference type="RefSeq" id="NP_054049.1">
    <property type="nucleotide sequence ID" value="NC_001623.1"/>
</dbReference>
<dbReference type="SMR" id="P41425"/>
<dbReference type="GeneID" id="1403852"/>
<dbReference type="KEGG" id="vg:1403852"/>
<dbReference type="Proteomes" id="UP000008292">
    <property type="component" value="Segment"/>
</dbReference>
<sequence>MCDASCDEEIISRRTPTFSPKLFRKSRELSPIKPVRTPTPPAPTPPPMCFSEELQRKFQEKKLLPVYDD</sequence>
<organism>
    <name type="scientific">Autographa californica nuclear polyhedrosis virus</name>
    <name type="common">AcMNPV</name>
    <dbReference type="NCBI Taxonomy" id="46015"/>
    <lineage>
        <taxon>Viruses</taxon>
        <taxon>Viruses incertae sedis</taxon>
        <taxon>Naldaviricetes</taxon>
        <taxon>Lefavirales</taxon>
        <taxon>Baculoviridae</taxon>
        <taxon>Alphabaculovirus</taxon>
        <taxon>Alphabaculovirus aucalifornicae</taxon>
    </lineage>
</organism>